<evidence type="ECO:0000250" key="1">
    <source>
        <dbReference type="UniProtKB" id="Q8BHI7"/>
    </source>
</evidence>
<evidence type="ECO:0000250" key="2">
    <source>
        <dbReference type="UniProtKB" id="Q9NYP7"/>
    </source>
</evidence>
<evidence type="ECO:0000255" key="3">
    <source>
        <dbReference type="HAMAP-Rule" id="MF_03205"/>
    </source>
</evidence>
<evidence type="ECO:0000255" key="4">
    <source>
        <dbReference type="RuleBase" id="RU361115"/>
    </source>
</evidence>
<evidence type="ECO:0000256" key="5">
    <source>
        <dbReference type="SAM" id="MobiDB-lite"/>
    </source>
</evidence>
<evidence type="ECO:0000269" key="6">
    <source>
    </source>
</evidence>
<evidence type="ECO:0000303" key="7">
    <source>
    </source>
</evidence>
<evidence type="ECO:0000312" key="8">
    <source>
        <dbReference type="EMBL" id="AJQ20792.1"/>
    </source>
</evidence>
<comment type="function">
    <text evidence="1 3">Catalyzes the first and rate-limiting reaction of the four reactions that constitute the long-chain fatty acids elongation cycle. This endoplasmic reticulum-bound enzymatic process allows the addition of 2 carbons to the chain of long- and very long-chain fatty acids (VLCFAs) per cycle. Condensing enzyme that acts specifically toward polyunsaturated acyl-CoA with the higher activity toward C18:3(n-6) acyl-CoA. May participate in the production of monounsaturated and of polyunsaturated VLCFAs of different chain lengths that are involved in multiple biological processes as precursors of membrane lipids and lipid mediators (By similarity). In conditions where the essential linoleic and alpha linoleic fatty acids are lacking it is also involved in the synthesis of Mead acid from oleic acid (By similarity).</text>
</comment>
<comment type="catalytic activity">
    <reaction evidence="3 4">
        <text>a very-long-chain acyl-CoA + malonyl-CoA + H(+) = a very-long-chain 3-oxoacyl-CoA + CO2 + CoA</text>
        <dbReference type="Rhea" id="RHEA:32727"/>
        <dbReference type="ChEBI" id="CHEBI:15378"/>
        <dbReference type="ChEBI" id="CHEBI:16526"/>
        <dbReference type="ChEBI" id="CHEBI:57287"/>
        <dbReference type="ChEBI" id="CHEBI:57384"/>
        <dbReference type="ChEBI" id="CHEBI:90725"/>
        <dbReference type="ChEBI" id="CHEBI:90736"/>
        <dbReference type="EC" id="2.3.1.199"/>
    </reaction>
    <physiologicalReaction direction="left-to-right" evidence="2">
        <dbReference type="Rhea" id="RHEA:32728"/>
    </physiologicalReaction>
</comment>
<comment type="catalytic activity">
    <reaction evidence="2">
        <text>(6Z,9Z,12Z)-octadecatrienoyl-CoA + malonyl-CoA + H(+) = (8Z,11Z,14Z)-3-oxoeicosatrienoyl-CoA + CO2 + CoA</text>
        <dbReference type="Rhea" id="RHEA:35379"/>
        <dbReference type="ChEBI" id="CHEBI:15378"/>
        <dbReference type="ChEBI" id="CHEBI:16526"/>
        <dbReference type="ChEBI" id="CHEBI:57287"/>
        <dbReference type="ChEBI" id="CHEBI:57363"/>
        <dbReference type="ChEBI" id="CHEBI:57384"/>
        <dbReference type="ChEBI" id="CHEBI:71481"/>
    </reaction>
    <physiologicalReaction direction="left-to-right" evidence="2">
        <dbReference type="Rhea" id="RHEA:35380"/>
    </physiologicalReaction>
</comment>
<comment type="catalytic activity">
    <reaction evidence="2">
        <text>(9Z,12Z,15Z)-octadecatrienoyl-CoA + malonyl-CoA + H(+) = (11Z,14Z,17Z)-3-oxoeicosatrienoyl-CoA + CO2 + CoA</text>
        <dbReference type="Rhea" id="RHEA:36523"/>
        <dbReference type="ChEBI" id="CHEBI:15378"/>
        <dbReference type="ChEBI" id="CHEBI:16526"/>
        <dbReference type="ChEBI" id="CHEBI:57287"/>
        <dbReference type="ChEBI" id="CHEBI:57384"/>
        <dbReference type="ChEBI" id="CHEBI:74034"/>
        <dbReference type="ChEBI" id="CHEBI:74054"/>
    </reaction>
    <physiologicalReaction direction="left-to-right" evidence="2">
        <dbReference type="Rhea" id="RHEA:36524"/>
    </physiologicalReaction>
</comment>
<comment type="catalytic activity">
    <reaction evidence="2">
        <text>(9Z)-hexadecenoyl-CoA + malonyl-CoA + H(+) = 3-oxo-(11Z)-octadecenoyl-CoA + CO2 + CoA</text>
        <dbReference type="Rhea" id="RHEA:39675"/>
        <dbReference type="ChEBI" id="CHEBI:15378"/>
        <dbReference type="ChEBI" id="CHEBI:16526"/>
        <dbReference type="ChEBI" id="CHEBI:57287"/>
        <dbReference type="ChEBI" id="CHEBI:57384"/>
        <dbReference type="ChEBI" id="CHEBI:61540"/>
        <dbReference type="ChEBI" id="CHEBI:76555"/>
    </reaction>
    <physiologicalReaction direction="left-to-right" evidence="2">
        <dbReference type="Rhea" id="RHEA:39676"/>
    </physiologicalReaction>
</comment>
<comment type="catalytic activity">
    <reaction evidence="2">
        <text>(9Z)-octadecenoyl-CoA + malonyl-CoA + H(+) = 3-oxo-(11Z)-eicosenoyl-CoA + CO2 + CoA</text>
        <dbReference type="Rhea" id="RHEA:36511"/>
        <dbReference type="ChEBI" id="CHEBI:15378"/>
        <dbReference type="ChEBI" id="CHEBI:16526"/>
        <dbReference type="ChEBI" id="CHEBI:57287"/>
        <dbReference type="ChEBI" id="CHEBI:57384"/>
        <dbReference type="ChEBI" id="CHEBI:57387"/>
        <dbReference type="ChEBI" id="CHEBI:74011"/>
    </reaction>
    <physiologicalReaction direction="left-to-right" evidence="2">
        <dbReference type="Rhea" id="RHEA:36512"/>
    </physiologicalReaction>
</comment>
<comment type="catalytic activity">
    <reaction evidence="2">
        <text>(11Z)-octadecenoyl-CoA + malonyl-CoA + H(+) = 3-oxo-(13Z)-eicosenoyl-CoA + CO2 + CoA</text>
        <dbReference type="Rhea" id="RHEA:39679"/>
        <dbReference type="ChEBI" id="CHEBI:15378"/>
        <dbReference type="ChEBI" id="CHEBI:16526"/>
        <dbReference type="ChEBI" id="CHEBI:57287"/>
        <dbReference type="ChEBI" id="CHEBI:57384"/>
        <dbReference type="ChEBI" id="CHEBI:75121"/>
        <dbReference type="ChEBI" id="CHEBI:76559"/>
    </reaction>
    <physiologicalReaction direction="left-to-right" evidence="2">
        <dbReference type="Rhea" id="RHEA:39680"/>
    </physiologicalReaction>
</comment>
<comment type="catalytic activity">
    <reaction evidence="2">
        <text>(9Z,12Z)-octadecadienoyl-CoA + malonyl-CoA + H(+) = (11Z,14Z)-3-oxoicosa-11,14-dienoyl-CoA + CO2 + CoA</text>
        <dbReference type="Rhea" id="RHEA:36503"/>
        <dbReference type="ChEBI" id="CHEBI:15378"/>
        <dbReference type="ChEBI" id="CHEBI:16526"/>
        <dbReference type="ChEBI" id="CHEBI:57287"/>
        <dbReference type="ChEBI" id="CHEBI:57383"/>
        <dbReference type="ChEBI" id="CHEBI:57384"/>
        <dbReference type="ChEBI" id="CHEBI:74012"/>
    </reaction>
    <physiologicalReaction direction="left-to-right" evidence="2">
        <dbReference type="Rhea" id="RHEA:36504"/>
    </physiologicalReaction>
</comment>
<comment type="catalytic activity">
    <reaction evidence="2">
        <text>(6Z,9Z,12Z,15Z)-octadecatetraenoyl-CoA + malonyl-CoA + H(+) = (8Z,11Z,14Z,17Z)-3-oxoicosatetraenoyl-CoA + CO2 + CoA</text>
        <dbReference type="Rhea" id="RHEA:35391"/>
        <dbReference type="ChEBI" id="CHEBI:15378"/>
        <dbReference type="ChEBI" id="CHEBI:16526"/>
        <dbReference type="ChEBI" id="CHEBI:57287"/>
        <dbReference type="ChEBI" id="CHEBI:57384"/>
        <dbReference type="ChEBI" id="CHEBI:71489"/>
        <dbReference type="ChEBI" id="CHEBI:71491"/>
    </reaction>
    <physiologicalReaction direction="left-to-right" evidence="2">
        <dbReference type="Rhea" id="RHEA:35392"/>
    </physiologicalReaction>
</comment>
<comment type="catalytic activity">
    <reaction evidence="2">
        <text>(5Z,8Z,11Z,14Z)-eicosatetraenoyl-CoA + malonyl-CoA + H(+) = (7Z,10Z,13Z,16Z)-3-oxodocosatetraenoyl-CoA + CO2 + CoA</text>
        <dbReference type="Rhea" id="RHEA:36475"/>
        <dbReference type="ChEBI" id="CHEBI:15378"/>
        <dbReference type="ChEBI" id="CHEBI:16526"/>
        <dbReference type="ChEBI" id="CHEBI:57287"/>
        <dbReference type="ChEBI" id="CHEBI:57368"/>
        <dbReference type="ChEBI" id="CHEBI:57384"/>
        <dbReference type="ChEBI" id="CHEBI:73852"/>
    </reaction>
    <physiologicalReaction direction="left-to-right" evidence="2">
        <dbReference type="Rhea" id="RHEA:36476"/>
    </physiologicalReaction>
</comment>
<comment type="catalytic activity">
    <reaction evidence="2">
        <text>(5Z,8Z,11Z,14Z,17Z)-eicosapentaenoyl-CoA + malonyl-CoA + H(+) = 3-oxo-(7Z,10Z,13Z,16Z,19Z)-docosapentaenoyl-CoA + CO2 + CoA</text>
        <dbReference type="Rhea" id="RHEA:36483"/>
        <dbReference type="ChEBI" id="CHEBI:15378"/>
        <dbReference type="ChEBI" id="CHEBI:16526"/>
        <dbReference type="ChEBI" id="CHEBI:57287"/>
        <dbReference type="ChEBI" id="CHEBI:57384"/>
        <dbReference type="ChEBI" id="CHEBI:73862"/>
        <dbReference type="ChEBI" id="CHEBI:73863"/>
    </reaction>
    <physiologicalReaction direction="left-to-right" evidence="2">
        <dbReference type="Rhea" id="RHEA:36484"/>
    </physiologicalReaction>
</comment>
<comment type="pathway">
    <text evidence="3">Lipid metabolism; polyunsaturated fatty acid biosynthesis.</text>
</comment>
<comment type="subcellular location">
    <subcellularLocation>
        <location evidence="3">Endoplasmic reticulum membrane</location>
        <topology evidence="3">Multi-pass membrane protein</topology>
    </subcellularLocation>
    <subcellularLocation>
        <location evidence="3">Cell projection</location>
        <location evidence="3">Dendrite</location>
    </subcellularLocation>
    <text evidence="3">In Purkinje cells, the protein localizes to the soma and proximal portion of the dendritic tree.</text>
</comment>
<comment type="tissue specificity">
    <text evidence="6">Expression is highest in intestine, followed by brain and heart, and lowest in gill. Also expressed in liver, spleen and muscle.</text>
</comment>
<comment type="similarity">
    <text evidence="3">Belongs to the ELO family. ELOVL5 subfamily.</text>
</comment>
<gene>
    <name evidence="3 7" type="primary">ELOVL5</name>
    <name evidence="8" type="synonym">ELO</name>
</gene>
<keyword id="KW-0966">Cell projection</keyword>
<keyword id="KW-0256">Endoplasmic reticulum</keyword>
<keyword id="KW-0275">Fatty acid biosynthesis</keyword>
<keyword id="KW-0276">Fatty acid metabolism</keyword>
<keyword id="KW-0444">Lipid biosynthesis</keyword>
<keyword id="KW-0443">Lipid metabolism</keyword>
<keyword id="KW-0472">Membrane</keyword>
<keyword id="KW-0808">Transferase</keyword>
<keyword id="KW-0812">Transmembrane</keyword>
<keyword id="KW-1133">Transmembrane helix</keyword>
<name>ELOV5_TACFU</name>
<protein>
    <recommendedName>
        <fullName evidence="3">Very long chain fatty acid elongase 5</fullName>
        <ecNumber evidence="3">2.3.1.199</ecNumber>
    </recommendedName>
    <alternativeName>
        <fullName evidence="3">3-keto acyl-CoA synthase ELOVL5</fullName>
    </alternativeName>
    <alternativeName>
        <fullName evidence="3">ELOVL fatty acid elongase 5</fullName>
        <shortName evidence="3">ELOVL FA elongase 5</shortName>
    </alternativeName>
    <alternativeName>
        <fullName evidence="3 7">Elongation of very long chain fatty acids protein 5</fullName>
    </alternativeName>
    <alternativeName>
        <fullName evidence="3">Very long chain 3-ketoacyl-CoA synthase 5</fullName>
    </alternativeName>
    <alternativeName>
        <fullName evidence="3">Very long chain 3-oxoacyl-CoA synthase 5</fullName>
    </alternativeName>
</protein>
<organism evidence="8">
    <name type="scientific">Tachysurus fulvidraco</name>
    <name type="common">Yellow catfish</name>
    <name type="synonym">Pimelodus fulvidraco</name>
    <dbReference type="NCBI Taxonomy" id="1234273"/>
    <lineage>
        <taxon>Eukaryota</taxon>
        <taxon>Metazoa</taxon>
        <taxon>Chordata</taxon>
        <taxon>Craniata</taxon>
        <taxon>Vertebrata</taxon>
        <taxon>Euteleostomi</taxon>
        <taxon>Actinopterygii</taxon>
        <taxon>Neopterygii</taxon>
        <taxon>Teleostei</taxon>
        <taxon>Ostariophysi</taxon>
        <taxon>Siluriformes</taxon>
        <taxon>Bagridae</taxon>
        <taxon>Tachysurus</taxon>
    </lineage>
</organism>
<dbReference type="EC" id="2.3.1.199" evidence="3"/>
<dbReference type="EMBL" id="KJ818304">
    <property type="protein sequence ID" value="AJQ20792.1"/>
    <property type="molecule type" value="mRNA"/>
</dbReference>
<dbReference type="SMR" id="A0A0C5PHQ7"/>
<dbReference type="UniPathway" id="UPA00658"/>
<dbReference type="GO" id="GO:0030425">
    <property type="term" value="C:dendrite"/>
    <property type="evidence" value="ECO:0007669"/>
    <property type="project" value="UniProtKB-SubCell"/>
</dbReference>
<dbReference type="GO" id="GO:0005789">
    <property type="term" value="C:endoplasmic reticulum membrane"/>
    <property type="evidence" value="ECO:0007669"/>
    <property type="project" value="UniProtKB-SubCell"/>
</dbReference>
<dbReference type="GO" id="GO:0009922">
    <property type="term" value="F:fatty acid elongase activity"/>
    <property type="evidence" value="ECO:0007669"/>
    <property type="project" value="UniProtKB-UniRule"/>
</dbReference>
<dbReference type="GO" id="GO:0034625">
    <property type="term" value="P:fatty acid elongation, monounsaturated fatty acid"/>
    <property type="evidence" value="ECO:0007669"/>
    <property type="project" value="UniProtKB-UniRule"/>
</dbReference>
<dbReference type="GO" id="GO:0034626">
    <property type="term" value="P:fatty acid elongation, polyunsaturated fatty acid"/>
    <property type="evidence" value="ECO:0007669"/>
    <property type="project" value="UniProtKB-UniRule"/>
</dbReference>
<dbReference type="GO" id="GO:0019367">
    <property type="term" value="P:fatty acid elongation, saturated fatty acid"/>
    <property type="evidence" value="ECO:0007669"/>
    <property type="project" value="InterPro"/>
</dbReference>
<dbReference type="GO" id="GO:0035338">
    <property type="term" value="P:long-chain fatty-acyl-CoA biosynthetic process"/>
    <property type="evidence" value="ECO:0007669"/>
    <property type="project" value="UniProtKB-UniRule"/>
</dbReference>
<dbReference type="GO" id="GO:0030148">
    <property type="term" value="P:sphingolipid biosynthetic process"/>
    <property type="evidence" value="ECO:0007669"/>
    <property type="project" value="TreeGrafter"/>
</dbReference>
<dbReference type="GO" id="GO:0006636">
    <property type="term" value="P:unsaturated fatty acid biosynthetic process"/>
    <property type="evidence" value="ECO:0007669"/>
    <property type="project" value="UniProtKB-UniRule"/>
</dbReference>
<dbReference type="GO" id="GO:0042761">
    <property type="term" value="P:very long-chain fatty acid biosynthetic process"/>
    <property type="evidence" value="ECO:0007669"/>
    <property type="project" value="UniProtKB-UniRule"/>
</dbReference>
<dbReference type="HAMAP" id="MF_03205">
    <property type="entry name" value="VLCF_elongase_5"/>
    <property type="match status" value="1"/>
</dbReference>
<dbReference type="InterPro" id="IPR002076">
    <property type="entry name" value="ELO_fam"/>
</dbReference>
<dbReference type="InterPro" id="IPR033677">
    <property type="entry name" value="ELOVL5"/>
</dbReference>
<dbReference type="PANTHER" id="PTHR11157:SF18">
    <property type="entry name" value="ELONGATION OF VERY LONG CHAIN FATTY ACIDS PROTEIN 5"/>
    <property type="match status" value="1"/>
</dbReference>
<dbReference type="PANTHER" id="PTHR11157">
    <property type="entry name" value="FATTY ACID ACYL TRANSFERASE-RELATED"/>
    <property type="match status" value="1"/>
</dbReference>
<dbReference type="Pfam" id="PF01151">
    <property type="entry name" value="ELO"/>
    <property type="match status" value="1"/>
</dbReference>
<feature type="chain" id="PRO_0000441395" description="Very long chain fatty acid elongase 5">
    <location>
        <begin position="1"/>
        <end position="294"/>
    </location>
</feature>
<feature type="transmembrane region" description="Helical" evidence="3">
    <location>
        <begin position="26"/>
        <end position="46"/>
    </location>
</feature>
<feature type="transmembrane region" description="Helical" evidence="3">
    <location>
        <begin position="64"/>
        <end position="84"/>
    </location>
</feature>
<feature type="transmembrane region" description="Helical" evidence="3">
    <location>
        <begin position="112"/>
        <end position="132"/>
    </location>
</feature>
<feature type="transmembrane region" description="Helical" evidence="3">
    <location>
        <begin position="141"/>
        <end position="161"/>
    </location>
</feature>
<feature type="transmembrane region" description="Helical" evidence="3">
    <location>
        <begin position="172"/>
        <end position="192"/>
    </location>
</feature>
<feature type="transmembrane region" description="Helical" evidence="3">
    <location>
        <begin position="207"/>
        <end position="227"/>
    </location>
</feature>
<feature type="transmembrane region" description="Helical" evidence="3">
    <location>
        <begin position="231"/>
        <end position="251"/>
    </location>
</feature>
<feature type="region of interest" description="Disordered" evidence="5">
    <location>
        <begin position="261"/>
        <end position="294"/>
    </location>
</feature>
<feature type="compositionally biased region" description="Polar residues" evidence="5">
    <location>
        <begin position="274"/>
        <end position="286"/>
    </location>
</feature>
<proteinExistence type="evidence at transcript level"/>
<sequence length="294" mass="34825">MEILNQRLNQQFDSWMGPRDPRVRGWLLLDNYLPTLSFTIIYLLIVWMGPKYMRNRQPVSCRGILVVYNMALTLLSLYMFYELVTAVWQGGYNFFCQDTHSGGEADNRVINVLWWYYFSKLIEFMDTFFFILRKNNHQITFLHIYHHFTMLNIWWFVMNWVPCGHSYFGATFNSFIHVLMYSYYGLSAIPAIQPYLWWKKYITQGQLVQFVLTMIQTSCAVVWPCGFPKGWLYFQISYMITLIILFSNFYIQTYKKKGTAAKKDPRHNGIKSVNGHSNGASHTNAVKNRKARTD</sequence>
<reference evidence="8" key="1">
    <citation type="journal article" date="2015" name="Gene">
        <title>Three unsaturated fatty acid biosynthesis-related genes in yellow catfish Pelteobagrus fulvidraco: Molecular characterization, tissue expression and transcriptional regulation by leptin.</title>
        <authorList>
            <person name="Song Y.F."/>
            <person name="Luo Z."/>
            <person name="Pan Y.X."/>
            <person name="Zhang L.H."/>
            <person name="Chen Q.L."/>
            <person name="Zheng J.L."/>
        </authorList>
    </citation>
    <scope>NUCLEOTIDE SEQUENCE [MRNA]</scope>
    <scope>TISSUE SPECIFICITY</scope>
    <scope>PHYLOGENETIC ANALYSIS</scope>
    <source>
        <tissue evidence="7">Liver</tissue>
    </source>
</reference>
<accession>A0A0C5PHQ7</accession>